<comment type="function">
    <text evidence="1">Essential for cell patterning during gastrulation. May be involved in protein traffic between late Golgi and early endosomes (By similarity).</text>
</comment>
<comment type="similarity">
    <text evidence="3">Belongs to the DOP1 family.</text>
</comment>
<sequence>MASASGGDVPAGREKDSKYRAFAKAVDQALKTFETPNEWADLISALGKLAKVFQSNAKYCAIPNRVTVAKRLSQCLHPALPMGVHLKALETYKIIFEILGPSKLPECLYLFAVGLFPLMDHCGIKVKSELFAIFENYLVPLGANLRPALPGFLGGVLLALEEGTEFYERSFILLDRVCEKVGPRAFYACLWQAILGSPPVRLPAMIYVNAKFDKLKSLDDQIHLVGDHVNHMVAALCAVADDTGSPLVQRYLLDFLCAAFPLDSTNLTDEDFVQLLRRCLFVVLRRDMSLNRRLYTWLINRSGETRGVSGLGGPDDGLELSFFKEKVLGLVHGALEQYLALDIIETPFANPQQSIWGDRKEAEQVQFAEVRVCRLLLYLQDRADIGRTILETVFSDFLKKSAEFHQGSNIKLIKKRPDSKPPRKPGDREGLHLDLNSLHSGVSGNSEDVTAPEGEPSIQSRRVDELSKTFNMLLNSLEPGFLWNFLGTWYQRIVEEGSEGKKSIHDFSQVVSICLEMSNVESDPAIRTQHLPRLLETILEGLSNKSLISECDQQDLLKLYTVCQKLLEISTAHPQSPIEVDEIAEDSLSLSQEVTAIEHERSQTDACLTQCVSALSTIFEIYTTRRDPSLIPLIDASTALLNAFLEVPIYYLGFDVVDNPEDVPSEVQQWLKNMLKVIDGPGWLKEMRNGHCSDVSARASLLELLCKIYVKSVSVLQQHEEAAHRPQDDFYDEMTHVLLKPLLGRRDIQFIEQGKVFGTCGEAVWLGIASRKFCCEQQRLARLLVELHSRRPQEASSDVESIVVQALTSTDDLVCTKAARTFHRVWVLTRNLEEAGGIYRKPFNRAVMILLGVLADESVSKTRTELKAAASAWFQDCSKHQDLPKIVQMLSTMLMNPVTARISIQYIRQDSKLTNEDCSAIPSDVAAVTLMTIDGKQRLYHVTGSGADSDASYLTEVRNRLLRASAGEETSEALQAHIIPSTEVLPAFDDDTDSLDTLSMGNESPEDVVKDILAILVDEVCQEYEERERLHDLLNLSNLEASGARFNLNEHEEQEESPEDRPAPIAAVQRVKKGHRRQDSLQESIFNMTEKDLCAFDTSEIFRPSTESLRGTATTSSTRETILPTGTVVGTVSSASSTGGSTSGSSLFEEMHTHMLLYGESGKVVDLARAETAFRILTALLAPRGATGNRMLLNCLVSSGTTTSSGTSSEGGSAEQSLVELMQRHVRAILGQHFWSAPASDEEKHKHFTLLELLITISLHFLRSYFLNSPISPVTEADLASLWKCKISALEFLCELFRELSAMLNEHESKQFVQFVQTILNRSKLQKCLLHLLLTAVDHNPMENGKLGGPLSVSISKFNEGLVGESRRLLPLLAAYHRSLLTFTSHAIRLECDIKRGFSTFSDAQSTHRYSIIQSVINQSFNNRTSSRDGHASTVELRAFLLILLNALKKQPHRHEMWLQFVVQILPWVERSLATIVCRVVEQLCKNMENAMSVAYENPPTSDVVVDSPGETRDEPDSYPANYLAMTLESLTTLVHFCVIDSAPTTTTTSGGVMTSSGAAQINDGTTPSSTSMVGHAMSVIPGSKVATELFSQLGKVFSMSGDSGGVLSSKMESSRQHGNGWRQAQSDMLTSLPHSLATVCNVWTVVRRAQNPLVPIGTNNQLRRLVLHLLSPIAQHHKHAFLTSLALVWLTRSTAKPTVTLRKQDPDRATFEYSSAQLDITNLLLSLQVIPFEDLISSVNSTLREASFKANKVGITTIDKTNFPTEEPLLELVHSCVSAVLQTQLRLCWSSLLSLFSEAPLSALSARAVFLLFVILSDFVKCVGGAYIVEDKAMYRNVQEVCSRLAEAVNAIVGWQLETTTWLKRTLVVKQDHGTSSINSNSIRSVEQSPIIEMQSSISNLSSEASQSTRNSTLSLINKPGGSITSGSTSTTTEKAEKKSSSNLRASIKDTNNNRRDPAHSTQALFLLAERLTDLLDSVSKSDEKDKVLPTLQAVWANVVPYLKAKNARNARFFLASSQLLASMSSYSYMRPVWKKTTLDLLLDSGFFKMDHAALKQWLVVTDHLMTHDRTSFKDLLKSISYSPNASFSIMTSKEQEYEARAQALKRLTFVVFGSQLDQYNGQMNDIQERLSDNLRVSQSPVIRSSFFLCVRVLLLRLRPHSLIGVWPIMVTELVHALSQLEQQLQNNGEQEGSSTSDQWMQLYVAACKLLETLCTLPAGYLSHFQMFHWAFVSSVSADKTEIFKPFAERINDLLAKKYGEFDAMSNHTASLAAVKILTSFEELRPFFYTLANLNKSVPESNNTPLRDAHALSGSLTYKNAVARLESALYVDFSEHLQF</sequence>
<name>PAD1_CAEBR</name>
<keyword id="KW-0217">Developmental protein</keyword>
<keyword id="KW-0653">Protein transport</keyword>
<keyword id="KW-1185">Reference proteome</keyword>
<keyword id="KW-0813">Transport</keyword>
<proteinExistence type="inferred from homology"/>
<protein>
    <recommendedName>
        <fullName>Protein pad-1</fullName>
    </recommendedName>
    <alternativeName>
        <fullName>Patterning defective protein 1</fullName>
    </alternativeName>
</protein>
<organism>
    <name type="scientific">Caenorhabditis briggsae</name>
    <dbReference type="NCBI Taxonomy" id="6238"/>
    <lineage>
        <taxon>Eukaryota</taxon>
        <taxon>Metazoa</taxon>
        <taxon>Ecdysozoa</taxon>
        <taxon>Nematoda</taxon>
        <taxon>Chromadorea</taxon>
        <taxon>Rhabditida</taxon>
        <taxon>Rhabditina</taxon>
        <taxon>Rhabditomorpha</taxon>
        <taxon>Rhabditoidea</taxon>
        <taxon>Rhabditidae</taxon>
        <taxon>Peloderinae</taxon>
        <taxon>Caenorhabditis</taxon>
    </lineage>
</organism>
<accession>Q5WNI9</accession>
<accession>A8X5I6</accession>
<reference key="1">
    <citation type="journal article" date="2003" name="PLoS Biol.">
        <title>The genome sequence of Caenorhabditis briggsae: a platform for comparative genomics.</title>
        <authorList>
            <person name="Stein L.D."/>
            <person name="Bao Z."/>
            <person name="Blasiar D."/>
            <person name="Blumenthal T."/>
            <person name="Brent M.R."/>
            <person name="Chen N."/>
            <person name="Chinwalla A."/>
            <person name="Clarke L."/>
            <person name="Clee C."/>
            <person name="Coghlan A."/>
            <person name="Coulson A."/>
            <person name="D'Eustachio P."/>
            <person name="Fitch D.H.A."/>
            <person name="Fulton L.A."/>
            <person name="Fulton R.E."/>
            <person name="Griffiths-Jones S."/>
            <person name="Harris T.W."/>
            <person name="Hillier L.W."/>
            <person name="Kamath R."/>
            <person name="Kuwabara P.E."/>
            <person name="Mardis E.R."/>
            <person name="Marra M.A."/>
            <person name="Miner T.L."/>
            <person name="Minx P."/>
            <person name="Mullikin J.C."/>
            <person name="Plumb R.W."/>
            <person name="Rogers J."/>
            <person name="Schein J.E."/>
            <person name="Sohrmann M."/>
            <person name="Spieth J."/>
            <person name="Stajich J.E."/>
            <person name="Wei C."/>
            <person name="Willey D."/>
            <person name="Wilson R.K."/>
            <person name="Durbin R.M."/>
            <person name="Waterston R.H."/>
        </authorList>
    </citation>
    <scope>NUCLEOTIDE SEQUENCE [LARGE SCALE GENOMIC DNA]</scope>
    <source>
        <strain>AF16</strain>
    </source>
</reference>
<evidence type="ECO:0000250" key="1"/>
<evidence type="ECO:0000256" key="2">
    <source>
        <dbReference type="SAM" id="MobiDB-lite"/>
    </source>
</evidence>
<evidence type="ECO:0000305" key="3"/>
<dbReference type="EMBL" id="HE600996">
    <property type="protein sequence ID" value="CAP27897.1"/>
    <property type="molecule type" value="Genomic_DNA"/>
</dbReference>
<dbReference type="FunCoup" id="Q5WNI9">
    <property type="interactions" value="2114"/>
</dbReference>
<dbReference type="STRING" id="6238.Q5WNI9"/>
<dbReference type="EnsemblMetazoa" id="CBG07989.1">
    <property type="protein sequence ID" value="CBG07989.1"/>
    <property type="gene ID" value="WBGene00029864"/>
</dbReference>
<dbReference type="KEGG" id="cbr:CBG_07989"/>
<dbReference type="CTD" id="8588172"/>
<dbReference type="WormBase" id="CBG07989">
    <property type="protein sequence ID" value="CBP02002"/>
    <property type="gene ID" value="WBGene00029864"/>
    <property type="gene designation" value="Cbr-pad-1"/>
</dbReference>
<dbReference type="eggNOG" id="KOG3613">
    <property type="taxonomic scope" value="Eukaryota"/>
</dbReference>
<dbReference type="HOGENOM" id="CLU_001045_0_0_1"/>
<dbReference type="InParanoid" id="Q5WNI9"/>
<dbReference type="OMA" id="LHHGCNF"/>
<dbReference type="Proteomes" id="UP000008549">
    <property type="component" value="Unassembled WGS sequence"/>
</dbReference>
<dbReference type="GO" id="GO:0005829">
    <property type="term" value="C:cytosol"/>
    <property type="evidence" value="ECO:0007669"/>
    <property type="project" value="GOC"/>
</dbReference>
<dbReference type="GO" id="GO:0005768">
    <property type="term" value="C:endosome"/>
    <property type="evidence" value="ECO:0000318"/>
    <property type="project" value="GO_Central"/>
</dbReference>
<dbReference type="GO" id="GO:0005802">
    <property type="term" value="C:trans-Golgi network"/>
    <property type="evidence" value="ECO:0000318"/>
    <property type="project" value="GO_Central"/>
</dbReference>
<dbReference type="GO" id="GO:0006895">
    <property type="term" value="P:Golgi to endosome transport"/>
    <property type="evidence" value="ECO:0007669"/>
    <property type="project" value="InterPro"/>
</dbReference>
<dbReference type="GO" id="GO:0015031">
    <property type="term" value="P:protein transport"/>
    <property type="evidence" value="ECO:0007669"/>
    <property type="project" value="UniProtKB-KW"/>
</dbReference>
<dbReference type="InterPro" id="IPR016024">
    <property type="entry name" value="ARM-type_fold"/>
</dbReference>
<dbReference type="InterPro" id="IPR040314">
    <property type="entry name" value="DOP1"/>
</dbReference>
<dbReference type="InterPro" id="IPR056457">
    <property type="entry name" value="DOP1_C"/>
</dbReference>
<dbReference type="InterPro" id="IPR007249">
    <property type="entry name" value="DOP1_N"/>
</dbReference>
<dbReference type="InterPro" id="IPR056459">
    <property type="entry name" value="TPR_DOP1"/>
</dbReference>
<dbReference type="PANTHER" id="PTHR14042">
    <property type="entry name" value="DOPEY-RELATED"/>
    <property type="match status" value="1"/>
</dbReference>
<dbReference type="PANTHER" id="PTHR14042:SF24">
    <property type="entry name" value="PROTEIN DOPEY-1 HOMOLOG"/>
    <property type="match status" value="1"/>
</dbReference>
<dbReference type="Pfam" id="PF24598">
    <property type="entry name" value="DOP1_C"/>
    <property type="match status" value="1"/>
</dbReference>
<dbReference type="Pfam" id="PF04118">
    <property type="entry name" value="Dopey_N"/>
    <property type="match status" value="1"/>
</dbReference>
<dbReference type="Pfam" id="PF24601">
    <property type="entry name" value="TPR_DOP1"/>
    <property type="match status" value="1"/>
</dbReference>
<dbReference type="SUPFAM" id="SSF48371">
    <property type="entry name" value="ARM repeat"/>
    <property type="match status" value="1"/>
</dbReference>
<gene>
    <name type="primary">pad-1</name>
    <name type="ORF">CBG07989</name>
</gene>
<feature type="chain" id="PRO_0000297951" description="Protein pad-1">
    <location>
        <begin position="1"/>
        <end position="2340"/>
    </location>
</feature>
<feature type="region of interest" description="Disordered" evidence="2">
    <location>
        <begin position="411"/>
        <end position="458"/>
    </location>
</feature>
<feature type="region of interest" description="Disordered" evidence="2">
    <location>
        <begin position="1910"/>
        <end position="1959"/>
    </location>
</feature>
<feature type="compositionally biased region" description="Basic and acidic residues" evidence="2">
    <location>
        <begin position="415"/>
        <end position="432"/>
    </location>
</feature>
<feature type="compositionally biased region" description="Polar residues" evidence="2">
    <location>
        <begin position="437"/>
        <end position="448"/>
    </location>
</feature>
<feature type="compositionally biased region" description="Low complexity" evidence="2">
    <location>
        <begin position="1922"/>
        <end position="1934"/>
    </location>
</feature>